<feature type="chain" id="PRO_0000195151" description="Dynein light chain Tctex-type 1">
    <location>
        <begin position="1"/>
        <end position="113"/>
    </location>
</feature>
<feature type="region of interest" description="Interaction with GNB1" evidence="1">
    <location>
        <begin position="41"/>
        <end position="113"/>
    </location>
</feature>
<feature type="modified residue" description="N-acetylmethionine" evidence="3">
    <location>
        <position position="1"/>
    </location>
</feature>
<feature type="mutagenesis site" description="No effect on interaction with dynein intermediate chain (DYNC1I1 or DYNC1I2). No effect in interaction with RHO. Mislocation of rhodopsin to basolateral surface of polarized epithelial cells." evidence="4">
    <original>S</original>
    <variation>A</variation>
    <location>
        <position position="82"/>
    </location>
</feature>
<feature type="mutagenesis site" description="Impairs interaction with dynein intermediate chain (DYNC1I1 or DYNC1I2). No effect in interaction with RHO. Mislocation of rhodopsin to apical and lateral surfaces of polarized epithelial cells." evidence="4">
    <original>S</original>
    <variation>E</variation>
    <location>
        <position position="82"/>
    </location>
</feature>
<gene>
    <name type="primary">DYNLT1</name>
    <name type="synonym">TCTEL</name>
    <name type="synonym">TCTEX-1</name>
    <name type="synonym">TCTEX1</name>
</gene>
<sequence>MEDYQAAEETAFVVDEVSNIVKEAIESAIGGNAYQHSKVNQWTTNVVEQTLSQLTKLGKPFKYIVTCVIMQKNGAGLHTASSCFWDSSTDGSCTVRWENKTMYCIVSAFGLSI</sequence>
<organism>
    <name type="scientific">Bos taurus</name>
    <name type="common">Bovine</name>
    <dbReference type="NCBI Taxonomy" id="9913"/>
    <lineage>
        <taxon>Eukaryota</taxon>
        <taxon>Metazoa</taxon>
        <taxon>Chordata</taxon>
        <taxon>Craniata</taxon>
        <taxon>Vertebrata</taxon>
        <taxon>Euteleostomi</taxon>
        <taxon>Mammalia</taxon>
        <taxon>Eutheria</taxon>
        <taxon>Laurasiatheria</taxon>
        <taxon>Artiodactyla</taxon>
        <taxon>Ruminantia</taxon>
        <taxon>Pecora</taxon>
        <taxon>Bovidae</taxon>
        <taxon>Bovinae</taxon>
        <taxon>Bos</taxon>
    </lineage>
</organism>
<keyword id="KW-0007">Acetylation</keyword>
<keyword id="KW-0131">Cell cycle</keyword>
<keyword id="KW-0132">Cell division</keyword>
<keyword id="KW-0963">Cytoplasm</keyword>
<keyword id="KW-0206">Cytoskeleton</keyword>
<keyword id="KW-0243">Dynein</keyword>
<keyword id="KW-0333">Golgi apparatus</keyword>
<keyword id="KW-0493">Microtubule</keyword>
<keyword id="KW-0498">Mitosis</keyword>
<keyword id="KW-0505">Motor protein</keyword>
<keyword id="KW-0524">Neurogenesis</keyword>
<keyword id="KW-0597">Phosphoprotein</keyword>
<keyword id="KW-1185">Reference proteome</keyword>
<keyword id="KW-0813">Transport</keyword>
<evidence type="ECO:0000250" key="1"/>
<evidence type="ECO:0000250" key="2">
    <source>
        <dbReference type="UniProtKB" id="P51807"/>
    </source>
</evidence>
<evidence type="ECO:0000250" key="3">
    <source>
        <dbReference type="UniProtKB" id="P63172"/>
    </source>
</evidence>
<evidence type="ECO:0000269" key="4">
    <source>
    </source>
</evidence>
<evidence type="ECO:0000269" key="5">
    <source>
    </source>
</evidence>
<evidence type="ECO:0000305" key="6"/>
<name>DYLT1_BOVIN</name>
<comment type="function">
    <text evidence="1">Acts as one of several non-catalytic accessory components of the cytoplasmic dynein 1 complex that are thought to be involved in linking dynein to cargos and to adapter proteins that regulate dynein function. Cytoplasmic dynein 1 acts as a motor for the intracellular retrograde motility of vesicles and organelles along microtubules. Binds to transport cargos and is involved in apical cargo transport such as rhodopsin-bearing vesicles in polarized epithelia. May also be a accessory component of axonemal dynein (By similarity).</text>
</comment>
<comment type="function">
    <text evidence="1 3">Plays a role in neuronal morphogenesis; the function is independent of cytoplasmic dynein and seems to be coupled to regulation of the actin cytoskeleton by enhancing Rac1 activity. The function in neurogenesis may be regulated by association with a G-protein beta-gamma dimer. May function as a receptor-independent activator of heterotrimeric G-protein signaling; the activation appears to be independent of a nucleotide exchange. Plays a role in regulating neurogenesis; inhibits the genesis of neurons from precursor cells during cortical development presumably by antagonizing ARHGEF2. Involved in the regulation of mitotic spindle orientation. Unrelated to the role in retrograde microtubule-associated movement may play a role in the dimerization of cytoplasmic proteins/domains such as for ACVR2B. Binds to the cytoplasmic domain of ACVR2B and, in vitro, inhibits ACVR2B signaling (By similarity).</text>
</comment>
<comment type="subunit">
    <text evidence="1 2 3">Homodimer (By similarity). The cytoplasmic dynein 1 complex consists of two catalytic heavy chains (HCs) and a number of non-catalytic subunits presented by intermediate chains (ICs), light intermediate chains (LICs) and light chains (LCs); the composition seems to vary in respect to the IC, LIC and LC composition. The heavy chain homodimer serves as a scaffold for the probable homodimeric assembly of the non-catalytic subunits. The ICs and LICs bind directly to the HC dimer and the LCs assemble on the IC dimer. DYNLT1 and DYNLT3 compete for association with dynein IC (DYNC1I1 or DYNC1I2). Self-associates. Interacts with RHO. Interacts with DYNC1I1 and DYNC1I2. Interacts with DOC2A, DOC2B and SCN10A. Interacts with PVR. Interacts with SVIL isoform 2. Interacts with GNB1; the interaction occurs in presence of guanine nucleotide-binding protein G(T) subunit gamma; the interaction diminishes the association of DYNLT1 with dynein IC (DYNC1I1 or DYNC1I2). Interacts with GNB2, GNB3 and GNB5; the interactions occur in presence of guanine nucleotide-binding protein G(T) subunit gamma. Interacts with ACVR2B and ARHGEF2 (By similarity). Interacts with DNAI4 (By similarity). Interacts with CFAP61 (By similarity).</text>
</comment>
<comment type="subcellular location">
    <subcellularLocation>
        <location evidence="5">Golgi apparatus</location>
    </subcellularLocation>
    <subcellularLocation>
        <location evidence="5">Cytoplasm</location>
    </subcellularLocation>
    <subcellularLocation>
        <location evidence="5">Cytoplasm</location>
        <location evidence="5">Cytoskeleton</location>
        <location evidence="5">Spindle</location>
    </subcellularLocation>
    <text>Localizes to mitotic spindles.</text>
</comment>
<comment type="PTM">
    <text evidence="1">Phosphorylated by BMPR2 (By similarity). The phosphorylation status is proposed to regulate the association with the cytoplasmic dynein complex and may have role in cytoplasmic dynein cargo release.</text>
</comment>
<comment type="similarity">
    <text evidence="6">Belongs to the dynein light chain Tctex-type family.</text>
</comment>
<reference key="1">
    <citation type="journal article" date="1998" name="J. Biol. Chem.">
        <title>Localization of Tctex-1, a cytoplasmic dynein light chain, to the Golgi apparatus and evidence for dynein complex heterogeneity.</title>
        <authorList>
            <person name="Tai A.W."/>
            <person name="Chuang J.-Z."/>
            <person name="Sung C.-H."/>
        </authorList>
    </citation>
    <scope>NUCLEOTIDE SEQUENCE [MRNA]</scope>
    <scope>SUBCELLULAR LOCATION</scope>
    <source>
        <tissue>Retina</tissue>
    </source>
</reference>
<reference key="2">
    <citation type="submission" date="2005-10" db="EMBL/GenBank/DDBJ databases">
        <authorList>
            <consortium name="NIH - Mammalian Gene Collection (MGC) project"/>
        </authorList>
    </citation>
    <scope>NUCLEOTIDE SEQUENCE [LARGE SCALE MRNA]</scope>
    <source>
        <strain>Crossbred X Angus</strain>
        <tissue>Liver</tissue>
    </source>
</reference>
<reference key="3">
    <citation type="journal article" date="2001" name="J. Cell Biol.">
        <title>Cytoplasmic dynein regulation by subunit heterogeneity and its role in apical transport.</title>
        <authorList>
            <person name="Tai A.W."/>
            <person name="Chuang J.Z."/>
            <person name="Sung C.H."/>
        </authorList>
    </citation>
    <scope>FUNCTION IN CYTOPLASMIC DYNEIN 1</scope>
    <scope>SUBUNIT</scope>
</reference>
<reference key="4">
    <citation type="journal article" date="2002" name="Protein Sci.">
        <title>Subunit organization in cytoplasmic dynein subcomplexes.</title>
        <authorList>
            <person name="King S.J."/>
            <person name="Bonilla M."/>
            <person name="Rodgers M.E."/>
            <person name="Schroer T.A."/>
        </authorList>
    </citation>
    <scope>SUBUNIT</scope>
    <scope>IDENTIFICATION IN THE CYTOPLASMIC DYNEIN 1 COMPLEX</scope>
</reference>
<reference key="5">
    <citation type="journal article" date="2006" name="Traffic">
        <title>Regulatory dissociation of Tctex-1 light chain from dynein complex is essential for the apical delivery of rhodopsin.</title>
        <authorList>
            <person name="Yeh T.Y."/>
            <person name="Peretti D."/>
            <person name="Chuang J.Z."/>
            <person name="Rodriguez-Boulan E."/>
            <person name="Sung C.H."/>
        </authorList>
    </citation>
    <scope>INTERACTION WITH RHO</scope>
    <scope>MUTAGENESIS OF SER-82</scope>
    <scope>FUNCTION IN CYTOPLASMIC DYNEIN 1</scope>
</reference>
<dbReference type="EMBL" id="AF067370">
    <property type="protein sequence ID" value="AAC39268.1"/>
    <property type="molecule type" value="mRNA"/>
</dbReference>
<dbReference type="EMBL" id="BC108160">
    <property type="protein sequence ID" value="AAI08161.1"/>
    <property type="molecule type" value="mRNA"/>
</dbReference>
<dbReference type="RefSeq" id="NP_777045.1">
    <property type="nucleotide sequence ID" value="NM_174620.2"/>
</dbReference>
<dbReference type="EMDB" id="EMD-50664"/>
<dbReference type="SMR" id="P63171"/>
<dbReference type="FunCoup" id="P63171">
    <property type="interactions" value="1365"/>
</dbReference>
<dbReference type="STRING" id="9913.ENSBTAP00000064993"/>
<dbReference type="iPTMnet" id="P63171"/>
<dbReference type="PaxDb" id="9913-ENSBTAP00000005869"/>
<dbReference type="Ensembl" id="ENSBTAT00000095480.1">
    <property type="protein sequence ID" value="ENSBTAP00000085289.1"/>
    <property type="gene ID" value="ENSBTAG00000004472.5"/>
</dbReference>
<dbReference type="GeneID" id="282380"/>
<dbReference type="KEGG" id="bta:282380"/>
<dbReference type="CTD" id="6993"/>
<dbReference type="eggNOG" id="KOG4081">
    <property type="taxonomic scope" value="Eukaryota"/>
</dbReference>
<dbReference type="GeneTree" id="ENSGT00940000154531"/>
<dbReference type="HOGENOM" id="CLU_097204_7_2_1"/>
<dbReference type="InParanoid" id="P63171"/>
<dbReference type="OrthoDB" id="10059120at2759"/>
<dbReference type="TreeFam" id="TF313904"/>
<dbReference type="Proteomes" id="UP000009136">
    <property type="component" value="Chromosome 9"/>
</dbReference>
<dbReference type="GO" id="GO:0005737">
    <property type="term" value="C:cytoplasm"/>
    <property type="evidence" value="ECO:0000318"/>
    <property type="project" value="GO_Central"/>
</dbReference>
<dbReference type="GO" id="GO:0005868">
    <property type="term" value="C:cytoplasmic dynein complex"/>
    <property type="evidence" value="ECO:0000314"/>
    <property type="project" value="UniProtKB"/>
</dbReference>
<dbReference type="GO" id="GO:0005794">
    <property type="term" value="C:Golgi apparatus"/>
    <property type="evidence" value="ECO:0007669"/>
    <property type="project" value="UniProtKB-SubCell"/>
</dbReference>
<dbReference type="GO" id="GO:0005874">
    <property type="term" value="C:microtubule"/>
    <property type="evidence" value="ECO:0007669"/>
    <property type="project" value="UniProtKB-KW"/>
</dbReference>
<dbReference type="GO" id="GO:0005819">
    <property type="term" value="C:spindle"/>
    <property type="evidence" value="ECO:0007669"/>
    <property type="project" value="UniProtKB-SubCell"/>
</dbReference>
<dbReference type="GO" id="GO:0045505">
    <property type="term" value="F:dynein intermediate chain binding"/>
    <property type="evidence" value="ECO:0000318"/>
    <property type="project" value="GO_Central"/>
</dbReference>
<dbReference type="GO" id="GO:0051301">
    <property type="term" value="P:cell division"/>
    <property type="evidence" value="ECO:0007669"/>
    <property type="project" value="UniProtKB-KW"/>
</dbReference>
<dbReference type="GO" id="GO:0000132">
    <property type="term" value="P:establishment of mitotic spindle orientation"/>
    <property type="evidence" value="ECO:0000250"/>
    <property type="project" value="UniProtKB"/>
</dbReference>
<dbReference type="GO" id="GO:0043001">
    <property type="term" value="P:Golgi to plasma membrane protein transport"/>
    <property type="evidence" value="ECO:0000315"/>
    <property type="project" value="UniProtKB"/>
</dbReference>
<dbReference type="GO" id="GO:0006886">
    <property type="term" value="P:intracellular protein transport"/>
    <property type="evidence" value="ECO:0000304"/>
    <property type="project" value="UniProtKB"/>
</dbReference>
<dbReference type="GO" id="GO:0007018">
    <property type="term" value="P:microtubule-based movement"/>
    <property type="evidence" value="ECO:0000318"/>
    <property type="project" value="GO_Central"/>
</dbReference>
<dbReference type="GO" id="GO:0050768">
    <property type="term" value="P:negative regulation of neurogenesis"/>
    <property type="evidence" value="ECO:0000250"/>
    <property type="project" value="UniProtKB"/>
</dbReference>
<dbReference type="GO" id="GO:0007399">
    <property type="term" value="P:nervous system development"/>
    <property type="evidence" value="ECO:0007669"/>
    <property type="project" value="UniProtKB-KW"/>
</dbReference>
<dbReference type="GO" id="GO:0008277">
    <property type="term" value="P:regulation of G protein-coupled receptor signaling pathway"/>
    <property type="evidence" value="ECO:0000250"/>
    <property type="project" value="UniProtKB"/>
</dbReference>
<dbReference type="CDD" id="cd21462">
    <property type="entry name" value="DLC-like_DYNLT1"/>
    <property type="match status" value="1"/>
</dbReference>
<dbReference type="FunFam" id="3.30.1140.40:FF:000001">
    <property type="entry name" value="Dynein light chain Tctex-type 1"/>
    <property type="match status" value="1"/>
</dbReference>
<dbReference type="Gene3D" id="3.30.1140.40">
    <property type="entry name" value="Tctex-1"/>
    <property type="match status" value="1"/>
</dbReference>
<dbReference type="InterPro" id="IPR005334">
    <property type="entry name" value="Tctex-1-like"/>
</dbReference>
<dbReference type="InterPro" id="IPR038586">
    <property type="entry name" value="Tctex-1-like_sf"/>
</dbReference>
<dbReference type="PANTHER" id="PTHR21255:SF19">
    <property type="entry name" value="DYNEIN LIGHT CHAIN TCTEX-TYPE 1"/>
    <property type="match status" value="1"/>
</dbReference>
<dbReference type="PANTHER" id="PTHR21255">
    <property type="entry name" value="T-COMPLEX-ASSOCIATED-TESTIS-EXPRESSED 1/ DYNEIN LIGHT CHAIN"/>
    <property type="match status" value="1"/>
</dbReference>
<dbReference type="Pfam" id="PF03645">
    <property type="entry name" value="Tctex-1"/>
    <property type="match status" value="1"/>
</dbReference>
<protein>
    <recommendedName>
        <fullName>Dynein light chain Tctex-type 1</fullName>
    </recommendedName>
    <alternativeName>
        <fullName>T-complex testis-specific protein 1 homolog</fullName>
    </alternativeName>
</protein>
<accession>P63171</accession>
<accession>Q15763</accession>
<accession>Q32PD4</accession>
<proteinExistence type="evidence at protein level"/>